<reference key="1">
    <citation type="submission" date="2006-08" db="EMBL/GenBank/DDBJ databases">
        <title>Positive selection in transcription factor genes on the human lineage.</title>
        <authorList>
            <person name="Nickel G.C."/>
            <person name="Tefft D.L."/>
            <person name="Trevarthen K."/>
            <person name="Funt J."/>
            <person name="Adams M.D."/>
        </authorList>
    </citation>
    <scope>NUCLEOTIDE SEQUENCE [GENOMIC DNA]</scope>
</reference>
<proteinExistence type="inferred from homology"/>
<dbReference type="EC" id="2.3.2.27"/>
<dbReference type="EMBL" id="DQ977176">
    <property type="protein sequence ID" value="ABM54206.1"/>
    <property type="molecule type" value="Genomic_DNA"/>
</dbReference>
<dbReference type="SMR" id="A1YFY1"/>
<dbReference type="STRING" id="9597.ENSPPAP00000000507"/>
<dbReference type="eggNOG" id="KOG0311">
    <property type="taxonomic scope" value="Eukaryota"/>
</dbReference>
<dbReference type="UniPathway" id="UPA00143"/>
<dbReference type="Proteomes" id="UP000240080">
    <property type="component" value="Unplaced"/>
</dbReference>
<dbReference type="GO" id="GO:0016607">
    <property type="term" value="C:nuclear speck"/>
    <property type="evidence" value="ECO:0007669"/>
    <property type="project" value="UniProtKB-SubCell"/>
</dbReference>
<dbReference type="GO" id="GO:0031519">
    <property type="term" value="C:PcG protein complex"/>
    <property type="evidence" value="ECO:0000250"/>
    <property type="project" value="UniProtKB"/>
</dbReference>
<dbReference type="GO" id="GO:0035102">
    <property type="term" value="C:PRC1 complex"/>
    <property type="evidence" value="ECO:0000250"/>
    <property type="project" value="UniProtKB"/>
</dbReference>
<dbReference type="GO" id="GO:0003682">
    <property type="term" value="F:chromatin binding"/>
    <property type="evidence" value="ECO:0007669"/>
    <property type="project" value="TreeGrafter"/>
</dbReference>
<dbReference type="GO" id="GO:0061630">
    <property type="term" value="F:ubiquitin protein ligase activity"/>
    <property type="evidence" value="ECO:0007669"/>
    <property type="project" value="TreeGrafter"/>
</dbReference>
<dbReference type="GO" id="GO:0008270">
    <property type="term" value="F:zinc ion binding"/>
    <property type="evidence" value="ECO:0007669"/>
    <property type="project" value="UniProtKB-KW"/>
</dbReference>
<dbReference type="GO" id="GO:0006325">
    <property type="term" value="P:chromatin organization"/>
    <property type="evidence" value="ECO:0007669"/>
    <property type="project" value="UniProtKB-KW"/>
</dbReference>
<dbReference type="GO" id="GO:0045892">
    <property type="term" value="P:negative regulation of DNA-templated transcription"/>
    <property type="evidence" value="ECO:0007669"/>
    <property type="project" value="TreeGrafter"/>
</dbReference>
<dbReference type="GO" id="GO:0016567">
    <property type="term" value="P:protein ubiquitination"/>
    <property type="evidence" value="ECO:0007669"/>
    <property type="project" value="UniProtKB-UniPathway"/>
</dbReference>
<dbReference type="CDD" id="cd17166">
    <property type="entry name" value="RAWUL_RING1"/>
    <property type="match status" value="1"/>
</dbReference>
<dbReference type="CDD" id="cd16740">
    <property type="entry name" value="RING-HC_RING2"/>
    <property type="match status" value="1"/>
</dbReference>
<dbReference type="FunFam" id="3.30.40.10:FF:000100">
    <property type="entry name" value="E3 ubiquitin-protein ligase RING2"/>
    <property type="match status" value="1"/>
</dbReference>
<dbReference type="Gene3D" id="3.10.20.90">
    <property type="entry name" value="Phosphatidylinositol 3-kinase Catalytic Subunit, Chain A, domain 1"/>
    <property type="match status" value="1"/>
</dbReference>
<dbReference type="Gene3D" id="3.30.40.10">
    <property type="entry name" value="Zinc/RING finger domain, C3HC4 (zinc finger)"/>
    <property type="match status" value="1"/>
</dbReference>
<dbReference type="InterPro" id="IPR032443">
    <property type="entry name" value="RAWUL"/>
</dbReference>
<dbReference type="InterPro" id="IPR043540">
    <property type="entry name" value="RING1/RING2"/>
</dbReference>
<dbReference type="InterPro" id="IPR001841">
    <property type="entry name" value="Znf_RING"/>
</dbReference>
<dbReference type="InterPro" id="IPR013083">
    <property type="entry name" value="Znf_RING/FYVE/PHD"/>
</dbReference>
<dbReference type="InterPro" id="IPR017907">
    <property type="entry name" value="Znf_RING_CS"/>
</dbReference>
<dbReference type="PANTHER" id="PTHR46076:SF2">
    <property type="entry name" value="E3 UBIQUITIN-PROTEIN LIGASE RING1"/>
    <property type="match status" value="1"/>
</dbReference>
<dbReference type="PANTHER" id="PTHR46076">
    <property type="entry name" value="E3 UBIQUITIN-PROTEIN LIGASE RING1 / RING 2 FAMILY MEMBER"/>
    <property type="match status" value="1"/>
</dbReference>
<dbReference type="Pfam" id="PF16207">
    <property type="entry name" value="RAWUL"/>
    <property type="match status" value="1"/>
</dbReference>
<dbReference type="Pfam" id="PF13923">
    <property type="entry name" value="zf-C3HC4_2"/>
    <property type="match status" value="1"/>
</dbReference>
<dbReference type="SMART" id="SM00184">
    <property type="entry name" value="RING"/>
    <property type="match status" value="1"/>
</dbReference>
<dbReference type="SUPFAM" id="SSF57850">
    <property type="entry name" value="RING/U-box"/>
    <property type="match status" value="1"/>
</dbReference>
<dbReference type="PROSITE" id="PS00518">
    <property type="entry name" value="ZF_RING_1"/>
    <property type="match status" value="1"/>
</dbReference>
<dbReference type="PROSITE" id="PS50089">
    <property type="entry name" value="ZF_RING_2"/>
    <property type="match status" value="1"/>
</dbReference>
<comment type="function">
    <text evidence="1">Constitutes one of the E3 ubiquitin-protein ligases that mediate monoubiquitination of 'Lys-119' of histone H2A, thereby playing a central role in histone code and gene regulation. H2A 'Lys-119' ubiquitination gives a specific tag for epigenetic transcriptional repression and participates in X chromosome inactivation of female mammals. Essential component of a Polycomb group (PcG) multiprotein PRC1-like complex, a complex class required to maintain the transcriptionally repressive state of many genes, including Hox genes, throughout development. PcG PRC1 complex acts via chromatin remodeling and modification of histones, rendering chromatin heritably changed in its expressibility. Compared to RNF2/RING2, it does not have the main E3 ubiquitin ligase activity on histone H2A, and it may rather act as a modulator of RNF2/RING2 activity (By similarity).</text>
</comment>
<comment type="catalytic activity">
    <reaction>
        <text>S-ubiquitinyl-[E2 ubiquitin-conjugating enzyme]-L-cysteine + [acceptor protein]-L-lysine = [E2 ubiquitin-conjugating enzyme]-L-cysteine + N(6)-ubiquitinyl-[acceptor protein]-L-lysine.</text>
        <dbReference type="EC" id="2.3.2.27"/>
    </reaction>
</comment>
<comment type="pathway">
    <text>Protein modification; protein ubiquitination.</text>
</comment>
<comment type="subunit">
    <text evidence="1 2">Component of chromatin-associated Polycomb (PcG) complexes. Part of the E2F6.com-1 complex in G0 phase composed of E2F6, MGA, MAX, TFDP1, CBX3, BAT8, EUHMTASE1, RING1, RNF2/RING2 MBLR, L3MBTL2 and YAF2. Interacts with CBX2 and PCGF6. Component of a PRC1-like complex. Component of repressive BCOR complex containing Polycomb group subcomplex at least composed of RYBP, PCGF1, BCOR and RNF2/RING2. Interacts with BMI1, PHC2, PCGF2, RNF2; CBX6, CBX7 and CBX8 (By similarity). Interacts with MN1 (By similarity).</text>
</comment>
<comment type="subcellular location">
    <subcellularLocation>
        <location evidence="1">Nucleus speckle</location>
    </subcellularLocation>
</comment>
<organism>
    <name type="scientific">Pan paniscus</name>
    <name type="common">Pygmy chimpanzee</name>
    <name type="synonym">Bonobo</name>
    <dbReference type="NCBI Taxonomy" id="9597"/>
    <lineage>
        <taxon>Eukaryota</taxon>
        <taxon>Metazoa</taxon>
        <taxon>Chordata</taxon>
        <taxon>Craniata</taxon>
        <taxon>Vertebrata</taxon>
        <taxon>Euteleostomi</taxon>
        <taxon>Mammalia</taxon>
        <taxon>Eutheria</taxon>
        <taxon>Euarchontoglires</taxon>
        <taxon>Primates</taxon>
        <taxon>Haplorrhini</taxon>
        <taxon>Catarrhini</taxon>
        <taxon>Hominidae</taxon>
        <taxon>Pan</taxon>
    </lineage>
</organism>
<sequence length="377" mass="39100">MDGTEIAVSPRSLHSELMCPICLDMLKNTMTTKECLHRFCSDCIVTALRSGNKECPTCRKKLVSKRSLRPDPNFDALISKIYPSREEYEAHQDRVLIRLSRLHNQQALSSSIEEGLRMQAMHRAQRVRRPIPGSDQTTTMSGGEGEPGEGEGDGEDVSSDSAPDSAPGPAPKRPRGGGAGGSSVGTGGGGTGGVGGGAGSEDSGDRGGTLGGGTLGPPSPPGAPSPPEPGGEIELVFRPHPLLVEKGEYCQTRYVKTTGNATVDHLSKYLALRIALERRQQQEAGEPGGPGGGASDTGGPDGGGGEGGGAGGGDGPEEPALPSLEGVSEKQYTIYIAPGGGAFTTLNGSLTLELVNEKFWKVSRPLELCYAPTKDPK</sequence>
<evidence type="ECO:0000250" key="1"/>
<evidence type="ECO:0000250" key="2">
    <source>
        <dbReference type="UniProtKB" id="Q06587"/>
    </source>
</evidence>
<evidence type="ECO:0000255" key="3"/>
<evidence type="ECO:0000255" key="4">
    <source>
        <dbReference type="PROSITE-ProRule" id="PRU00175"/>
    </source>
</evidence>
<evidence type="ECO:0000256" key="5">
    <source>
        <dbReference type="SAM" id="MobiDB-lite"/>
    </source>
</evidence>
<evidence type="ECO:0000305" key="6"/>
<keyword id="KW-0156">Chromatin regulator</keyword>
<keyword id="KW-0479">Metal-binding</keyword>
<keyword id="KW-0539">Nucleus</keyword>
<keyword id="KW-0597">Phosphoprotein</keyword>
<keyword id="KW-1185">Reference proteome</keyword>
<keyword id="KW-0678">Repressor</keyword>
<keyword id="KW-0804">Transcription</keyword>
<keyword id="KW-0805">Transcription regulation</keyword>
<keyword id="KW-0808">Transferase</keyword>
<keyword id="KW-0833">Ubl conjugation pathway</keyword>
<keyword id="KW-0862">Zinc</keyword>
<keyword id="KW-0863">Zinc-finger</keyword>
<gene>
    <name type="primary">RING1</name>
</gene>
<name>RING1_PANPA</name>
<feature type="chain" id="PRO_0000285536" description="E3 ubiquitin-protein ligase RING1">
    <location>
        <begin position="1"/>
        <end position="377"/>
    </location>
</feature>
<feature type="zinc finger region" description="RING-type" evidence="4">
    <location>
        <begin position="19"/>
        <end position="59"/>
    </location>
</feature>
<feature type="region of interest" description="Necessary for transcriptional repression" evidence="1">
    <location>
        <begin position="1"/>
        <end position="205"/>
    </location>
</feature>
<feature type="region of interest" description="Disordered" evidence="5">
    <location>
        <begin position="119"/>
        <end position="234"/>
    </location>
</feature>
<feature type="region of interest" description="Necessary for interaction with CBX2" evidence="1">
    <location>
        <begin position="201"/>
        <end position="377"/>
    </location>
</feature>
<feature type="region of interest" description="Disordered" evidence="5">
    <location>
        <begin position="280"/>
        <end position="325"/>
    </location>
</feature>
<feature type="short sequence motif" description="Nuclear localization signal" evidence="3">
    <location>
        <begin position="172"/>
        <end position="175"/>
    </location>
</feature>
<feature type="compositionally biased region" description="Acidic residues" evidence="5">
    <location>
        <begin position="146"/>
        <end position="158"/>
    </location>
</feature>
<feature type="compositionally biased region" description="Gly residues" evidence="5">
    <location>
        <begin position="176"/>
        <end position="199"/>
    </location>
</feature>
<feature type="compositionally biased region" description="Gly residues" evidence="5">
    <location>
        <begin position="206"/>
        <end position="215"/>
    </location>
</feature>
<feature type="compositionally biased region" description="Pro residues" evidence="5">
    <location>
        <begin position="217"/>
        <end position="229"/>
    </location>
</feature>
<feature type="compositionally biased region" description="Gly residues" evidence="5">
    <location>
        <begin position="286"/>
        <end position="314"/>
    </location>
</feature>
<feature type="modified residue" description="Phosphoserine" evidence="2">
    <location>
        <position position="9"/>
    </location>
</feature>
<feature type="modified residue" description="Phosphoserine" evidence="2">
    <location>
        <position position="111"/>
    </location>
</feature>
<feature type="modified residue" description="Phosphoserine" evidence="2">
    <location>
        <position position="158"/>
    </location>
</feature>
<feature type="modified residue" description="Phosphoserine" evidence="2">
    <location>
        <position position="161"/>
    </location>
</feature>
<feature type="modified residue" description="Phosphothreonine" evidence="2">
    <location>
        <position position="186"/>
    </location>
</feature>
<feature type="modified residue" description="Phosphothreonine" evidence="2">
    <location>
        <position position="191"/>
    </location>
</feature>
<feature type="modified residue" description="Phosphoserine" evidence="2">
    <location>
        <position position="200"/>
    </location>
</feature>
<feature type="modified residue" description="Phosphoserine" evidence="2">
    <location>
        <position position="203"/>
    </location>
</feature>
<feature type="modified residue" description="Phosphoserine" evidence="2">
    <location>
        <position position="219"/>
    </location>
</feature>
<feature type="modified residue" description="Phosphoserine" evidence="2">
    <location>
        <position position="225"/>
    </location>
</feature>
<protein>
    <recommendedName>
        <fullName>E3 ubiquitin-protein ligase RING1</fullName>
        <ecNumber>2.3.2.27</ecNumber>
    </recommendedName>
    <alternativeName>
        <fullName>Polycomb complex protein RING1</fullName>
    </alternativeName>
    <alternativeName>
        <fullName>RING finger protein 1</fullName>
    </alternativeName>
    <alternativeName>
        <fullName evidence="6">RING-type E3 ubiquitin transferase RING1</fullName>
    </alternativeName>
</protein>
<accession>A1YFY1</accession>